<sequence length="393" mass="43528">MIKYEIPKSRPNEFSKVLPLVEQILNQVKERGDKALLELEEKYDKAKLDSLVENRIDELASKIPEEYKAAIDRIYDQLVEFHKTTLPYMVGGGYNGIEFGILWRAIEKVGIYVPGGLKSYPSTLLMAAIPARVAGVSEIYVATPPNRIDSVIAYIAKKLKINALYRIGGAQAIAALAYGTESVKKVDKIVGPGNIFVQASKFLVSKDVAIDGIEGPTELVVIADSSADYRHVILDMRAQAEHGSTSYIILVTTSDFLIDKVREELDKEEFTYYIVKVKSIDEAIDVANDIAPEHLSLFVNDPKSYLHKIKNAGAISLGKTPPALIDYAAGPDHILPTNAWSRVRGGLTVYDFLKPISYANSVNPDKELVNMAKLIAEYEGFIYHSKSIGARYE</sequence>
<protein>
    <recommendedName>
        <fullName evidence="1">Histidinol dehydrogenase</fullName>
        <shortName evidence="1">HDH</shortName>
        <ecNumber evidence="1">1.1.1.23</ecNumber>
    </recommendedName>
</protein>
<proteinExistence type="inferred from homology"/>
<organism>
    <name type="scientific">Sulfolobus acidocaldarius (strain ATCC 33909 / DSM 639 / JCM 8929 / NBRC 15157 / NCIMB 11770)</name>
    <dbReference type="NCBI Taxonomy" id="330779"/>
    <lineage>
        <taxon>Archaea</taxon>
        <taxon>Thermoproteota</taxon>
        <taxon>Thermoprotei</taxon>
        <taxon>Sulfolobales</taxon>
        <taxon>Sulfolobaceae</taxon>
        <taxon>Sulfolobus</taxon>
    </lineage>
</organism>
<reference key="1">
    <citation type="journal article" date="2005" name="J. Bacteriol.">
        <title>The genome of Sulfolobus acidocaldarius, a model organism of the Crenarchaeota.</title>
        <authorList>
            <person name="Chen L."/>
            <person name="Bruegger K."/>
            <person name="Skovgaard M."/>
            <person name="Redder P."/>
            <person name="She Q."/>
            <person name="Torarinsson E."/>
            <person name="Greve B."/>
            <person name="Awayez M."/>
            <person name="Zibat A."/>
            <person name="Klenk H.-P."/>
            <person name="Garrett R.A."/>
        </authorList>
    </citation>
    <scope>NUCLEOTIDE SEQUENCE [LARGE SCALE GENOMIC DNA]</scope>
    <source>
        <strain>ATCC 33909 / DSM 639 / JCM 8929 / NBRC 15157 / NCIMB 11770</strain>
    </source>
</reference>
<keyword id="KW-0028">Amino-acid biosynthesis</keyword>
<keyword id="KW-0368">Histidine biosynthesis</keyword>
<keyword id="KW-0479">Metal-binding</keyword>
<keyword id="KW-0520">NAD</keyword>
<keyword id="KW-0560">Oxidoreductase</keyword>
<keyword id="KW-1185">Reference proteome</keyword>
<keyword id="KW-0862">Zinc</keyword>
<comment type="function">
    <text evidence="1">Catalyzes the sequential NAD-dependent oxidations of L-histidinol to L-histidinaldehyde and then to L-histidine.</text>
</comment>
<comment type="catalytic activity">
    <reaction evidence="1">
        <text>L-histidinol + 2 NAD(+) + H2O = L-histidine + 2 NADH + 3 H(+)</text>
        <dbReference type="Rhea" id="RHEA:20641"/>
        <dbReference type="ChEBI" id="CHEBI:15377"/>
        <dbReference type="ChEBI" id="CHEBI:15378"/>
        <dbReference type="ChEBI" id="CHEBI:57540"/>
        <dbReference type="ChEBI" id="CHEBI:57595"/>
        <dbReference type="ChEBI" id="CHEBI:57699"/>
        <dbReference type="ChEBI" id="CHEBI:57945"/>
        <dbReference type="EC" id="1.1.1.23"/>
    </reaction>
</comment>
<comment type="cofactor">
    <cofactor evidence="1">
        <name>Zn(2+)</name>
        <dbReference type="ChEBI" id="CHEBI:29105"/>
    </cofactor>
    <text evidence="1">Binds 1 zinc ion per subunit.</text>
</comment>
<comment type="pathway">
    <text evidence="1">Amino-acid biosynthesis; L-histidine biosynthesis; L-histidine from 5-phospho-alpha-D-ribose 1-diphosphate: step 9/9.</text>
</comment>
<comment type="similarity">
    <text evidence="1">Belongs to the histidinol dehydrogenase family.</text>
</comment>
<accession>Q4J8I8</accession>
<feature type="chain" id="PRO_0000135905" description="Histidinol dehydrogenase">
    <location>
        <begin position="1"/>
        <end position="393"/>
    </location>
</feature>
<feature type="active site" description="Proton acceptor" evidence="1">
    <location>
        <position position="293"/>
    </location>
</feature>
<feature type="active site" description="Proton acceptor" evidence="1">
    <location>
        <position position="294"/>
    </location>
</feature>
<feature type="binding site" evidence="1">
    <location>
        <position position="112"/>
    </location>
    <ligand>
        <name>NAD(+)</name>
        <dbReference type="ChEBI" id="CHEBI:57540"/>
    </ligand>
</feature>
<feature type="binding site" evidence="1">
    <location>
        <position position="171"/>
    </location>
    <ligand>
        <name>NAD(+)</name>
        <dbReference type="ChEBI" id="CHEBI:57540"/>
    </ligand>
</feature>
<feature type="binding site" evidence="1">
    <location>
        <position position="194"/>
    </location>
    <ligand>
        <name>NAD(+)</name>
        <dbReference type="ChEBI" id="CHEBI:57540"/>
    </ligand>
</feature>
<feature type="binding site" evidence="1">
    <location>
        <position position="217"/>
    </location>
    <ligand>
        <name>substrate</name>
    </ligand>
</feature>
<feature type="binding site" evidence="1">
    <location>
        <position position="239"/>
    </location>
    <ligand>
        <name>substrate</name>
    </ligand>
</feature>
<feature type="binding site" evidence="1">
    <location>
        <position position="239"/>
    </location>
    <ligand>
        <name>Zn(2+)</name>
        <dbReference type="ChEBI" id="CHEBI:29105"/>
    </ligand>
</feature>
<feature type="binding site" evidence="1">
    <location>
        <position position="242"/>
    </location>
    <ligand>
        <name>substrate</name>
    </ligand>
</feature>
<feature type="binding site" evidence="1">
    <location>
        <position position="242"/>
    </location>
    <ligand>
        <name>Zn(2+)</name>
        <dbReference type="ChEBI" id="CHEBI:29105"/>
    </ligand>
</feature>
<feature type="binding site" evidence="1">
    <location>
        <position position="294"/>
    </location>
    <ligand>
        <name>substrate</name>
    </ligand>
</feature>
<feature type="binding site" evidence="1">
    <location>
        <position position="326"/>
    </location>
    <ligand>
        <name>substrate</name>
    </ligand>
</feature>
<feature type="binding site" evidence="1">
    <location>
        <position position="326"/>
    </location>
    <ligand>
        <name>Zn(2+)</name>
        <dbReference type="ChEBI" id="CHEBI:29105"/>
    </ligand>
</feature>
<feature type="binding site" evidence="1">
    <location>
        <position position="379"/>
    </location>
    <ligand>
        <name>substrate</name>
    </ligand>
</feature>
<feature type="binding site" evidence="1">
    <location>
        <position position="384"/>
    </location>
    <ligand>
        <name>substrate</name>
    </ligand>
</feature>
<feature type="binding site" evidence="1">
    <location>
        <position position="384"/>
    </location>
    <ligand>
        <name>Zn(2+)</name>
        <dbReference type="ChEBI" id="CHEBI:29105"/>
    </ligand>
</feature>
<evidence type="ECO:0000255" key="1">
    <source>
        <dbReference type="HAMAP-Rule" id="MF_01024"/>
    </source>
</evidence>
<gene>
    <name evidence="1" type="primary">hisD</name>
    <name type="ordered locus">Saci_1579</name>
</gene>
<name>HISX_SULAC</name>
<dbReference type="EC" id="1.1.1.23" evidence="1"/>
<dbReference type="EMBL" id="CP000077">
    <property type="protein sequence ID" value="AAY80892.1"/>
    <property type="molecule type" value="Genomic_DNA"/>
</dbReference>
<dbReference type="RefSeq" id="WP_011278394.1">
    <property type="nucleotide sequence ID" value="NC_007181.1"/>
</dbReference>
<dbReference type="SMR" id="Q4J8I8"/>
<dbReference type="STRING" id="330779.Saci_1579"/>
<dbReference type="GeneID" id="14552072"/>
<dbReference type="GeneID" id="78441922"/>
<dbReference type="KEGG" id="sai:Saci_1579"/>
<dbReference type="PATRIC" id="fig|330779.12.peg.1519"/>
<dbReference type="eggNOG" id="arCOG04352">
    <property type="taxonomic scope" value="Archaea"/>
</dbReference>
<dbReference type="HOGENOM" id="CLU_006732_3_3_2"/>
<dbReference type="UniPathway" id="UPA00031">
    <property type="reaction ID" value="UER00014"/>
</dbReference>
<dbReference type="Proteomes" id="UP000001018">
    <property type="component" value="Chromosome"/>
</dbReference>
<dbReference type="GO" id="GO:0005737">
    <property type="term" value="C:cytoplasm"/>
    <property type="evidence" value="ECO:0007669"/>
    <property type="project" value="TreeGrafter"/>
</dbReference>
<dbReference type="GO" id="GO:0004399">
    <property type="term" value="F:histidinol dehydrogenase activity"/>
    <property type="evidence" value="ECO:0007669"/>
    <property type="project" value="UniProtKB-UniRule"/>
</dbReference>
<dbReference type="GO" id="GO:0051287">
    <property type="term" value="F:NAD binding"/>
    <property type="evidence" value="ECO:0007669"/>
    <property type="project" value="InterPro"/>
</dbReference>
<dbReference type="GO" id="GO:0008270">
    <property type="term" value="F:zinc ion binding"/>
    <property type="evidence" value="ECO:0007669"/>
    <property type="project" value="UniProtKB-UniRule"/>
</dbReference>
<dbReference type="GO" id="GO:0000105">
    <property type="term" value="P:L-histidine biosynthetic process"/>
    <property type="evidence" value="ECO:0007669"/>
    <property type="project" value="UniProtKB-UniRule"/>
</dbReference>
<dbReference type="CDD" id="cd06572">
    <property type="entry name" value="Histidinol_dh"/>
    <property type="match status" value="1"/>
</dbReference>
<dbReference type="FunFam" id="3.40.50.1980:FF:000001">
    <property type="entry name" value="Histidinol dehydrogenase"/>
    <property type="match status" value="1"/>
</dbReference>
<dbReference type="Gene3D" id="1.20.5.1300">
    <property type="match status" value="1"/>
</dbReference>
<dbReference type="Gene3D" id="3.40.50.1980">
    <property type="entry name" value="Nitrogenase molybdenum iron protein domain"/>
    <property type="match status" value="2"/>
</dbReference>
<dbReference type="HAMAP" id="MF_01024">
    <property type="entry name" value="HisD"/>
    <property type="match status" value="1"/>
</dbReference>
<dbReference type="InterPro" id="IPR016161">
    <property type="entry name" value="Ald_DH/histidinol_DH"/>
</dbReference>
<dbReference type="InterPro" id="IPR001692">
    <property type="entry name" value="Histidinol_DH_CS"/>
</dbReference>
<dbReference type="InterPro" id="IPR022695">
    <property type="entry name" value="Histidinol_DH_monofunct"/>
</dbReference>
<dbReference type="InterPro" id="IPR012131">
    <property type="entry name" value="Hstdl_DH"/>
</dbReference>
<dbReference type="NCBIfam" id="TIGR00069">
    <property type="entry name" value="hisD"/>
    <property type="match status" value="1"/>
</dbReference>
<dbReference type="PANTHER" id="PTHR21256:SF2">
    <property type="entry name" value="HISTIDINE BIOSYNTHESIS TRIFUNCTIONAL PROTEIN"/>
    <property type="match status" value="1"/>
</dbReference>
<dbReference type="PANTHER" id="PTHR21256">
    <property type="entry name" value="HISTIDINOL DEHYDROGENASE HDH"/>
    <property type="match status" value="1"/>
</dbReference>
<dbReference type="Pfam" id="PF00815">
    <property type="entry name" value="Histidinol_dh"/>
    <property type="match status" value="1"/>
</dbReference>
<dbReference type="PIRSF" id="PIRSF000099">
    <property type="entry name" value="Histidinol_dh"/>
    <property type="match status" value="1"/>
</dbReference>
<dbReference type="PRINTS" id="PR00083">
    <property type="entry name" value="HOLDHDRGNASE"/>
</dbReference>
<dbReference type="SUPFAM" id="SSF53720">
    <property type="entry name" value="ALDH-like"/>
    <property type="match status" value="1"/>
</dbReference>
<dbReference type="PROSITE" id="PS00611">
    <property type="entry name" value="HISOL_DEHYDROGENASE"/>
    <property type="match status" value="1"/>
</dbReference>